<comment type="function">
    <text evidence="1">Catalyzes the cleavage of 5-oxoproline to form L-glutamate coupled to the hydrolysis of ATP to ADP and inorganic phosphate.</text>
</comment>
<comment type="catalytic activity">
    <reaction evidence="1">
        <text>5-oxo-L-proline + ATP + 2 H2O = L-glutamate + ADP + phosphate + H(+)</text>
        <dbReference type="Rhea" id="RHEA:10348"/>
        <dbReference type="ChEBI" id="CHEBI:15377"/>
        <dbReference type="ChEBI" id="CHEBI:15378"/>
        <dbReference type="ChEBI" id="CHEBI:29985"/>
        <dbReference type="ChEBI" id="CHEBI:30616"/>
        <dbReference type="ChEBI" id="CHEBI:43474"/>
        <dbReference type="ChEBI" id="CHEBI:58402"/>
        <dbReference type="ChEBI" id="CHEBI:456216"/>
        <dbReference type="EC" id="3.5.2.9"/>
    </reaction>
</comment>
<comment type="subunit">
    <text evidence="1">Forms a complex composed of PxpA, PxpB and PxpC.</text>
</comment>
<comment type="similarity">
    <text evidence="1">Belongs to the LamB/PxpA family.</text>
</comment>
<organism>
    <name type="scientific">Escherichia coli O17:K52:H18 (strain UMN026 / ExPEC)</name>
    <dbReference type="NCBI Taxonomy" id="585056"/>
    <lineage>
        <taxon>Bacteria</taxon>
        <taxon>Pseudomonadati</taxon>
        <taxon>Pseudomonadota</taxon>
        <taxon>Gammaproteobacteria</taxon>
        <taxon>Enterobacterales</taxon>
        <taxon>Enterobacteriaceae</taxon>
        <taxon>Escherichia</taxon>
    </lineage>
</organism>
<sequence>MKIDLNADLGEGYASDAELLTLVSSANIACGFHAGDAQTMQACVREAIKNGVAIGAHPSFPDRENFGRRAMQLPPETVYAQTLYQIGALAAITRAQGGVMCHVKPHGMLYNQAAKEAQLADAIARAVYACDPALILVGLAGSELIRAGKQYGLTTREEVFADRGYQADGSLVPRSQPGALIENEEQALEQTLEMVQHGRVKSITGEWATVTAQTVCLHGDGEHALAFARRLRSTFAEKGIVVAA</sequence>
<evidence type="ECO:0000255" key="1">
    <source>
        <dbReference type="HAMAP-Rule" id="MF_00691"/>
    </source>
</evidence>
<name>PXPA_ECOLU</name>
<protein>
    <recommendedName>
        <fullName evidence="1">5-oxoprolinase subunit A</fullName>
        <shortName evidence="1">5-OPase subunit A</shortName>
        <ecNumber evidence="1">3.5.2.9</ecNumber>
    </recommendedName>
    <alternativeName>
        <fullName evidence="1">5-oxoprolinase (ATP-hydrolyzing) subunit A</fullName>
    </alternativeName>
</protein>
<reference key="1">
    <citation type="journal article" date="2009" name="PLoS Genet.">
        <title>Organised genome dynamics in the Escherichia coli species results in highly diverse adaptive paths.</title>
        <authorList>
            <person name="Touchon M."/>
            <person name="Hoede C."/>
            <person name="Tenaillon O."/>
            <person name="Barbe V."/>
            <person name="Baeriswyl S."/>
            <person name="Bidet P."/>
            <person name="Bingen E."/>
            <person name="Bonacorsi S."/>
            <person name="Bouchier C."/>
            <person name="Bouvet O."/>
            <person name="Calteau A."/>
            <person name="Chiapello H."/>
            <person name="Clermont O."/>
            <person name="Cruveiller S."/>
            <person name="Danchin A."/>
            <person name="Diard M."/>
            <person name="Dossat C."/>
            <person name="Karoui M.E."/>
            <person name="Frapy E."/>
            <person name="Garry L."/>
            <person name="Ghigo J.M."/>
            <person name="Gilles A.M."/>
            <person name="Johnson J."/>
            <person name="Le Bouguenec C."/>
            <person name="Lescat M."/>
            <person name="Mangenot S."/>
            <person name="Martinez-Jehanne V."/>
            <person name="Matic I."/>
            <person name="Nassif X."/>
            <person name="Oztas S."/>
            <person name="Petit M.A."/>
            <person name="Pichon C."/>
            <person name="Rouy Z."/>
            <person name="Ruf C.S."/>
            <person name="Schneider D."/>
            <person name="Tourret J."/>
            <person name="Vacherie B."/>
            <person name="Vallenet D."/>
            <person name="Medigue C."/>
            <person name="Rocha E.P.C."/>
            <person name="Denamur E."/>
        </authorList>
    </citation>
    <scope>NUCLEOTIDE SEQUENCE [LARGE SCALE GENOMIC DNA]</scope>
    <source>
        <strain>UMN026 / ExPEC</strain>
    </source>
</reference>
<accession>B7N9V2</accession>
<feature type="chain" id="PRO_1000132054" description="5-oxoprolinase subunit A">
    <location>
        <begin position="1"/>
        <end position="244"/>
    </location>
</feature>
<proteinExistence type="inferred from homology"/>
<dbReference type="EC" id="3.5.2.9" evidence="1"/>
<dbReference type="EMBL" id="CU928163">
    <property type="protein sequence ID" value="CAR12003.1"/>
    <property type="molecule type" value="Genomic_DNA"/>
</dbReference>
<dbReference type="RefSeq" id="WP_000687174.1">
    <property type="nucleotide sequence ID" value="NC_011751.1"/>
</dbReference>
<dbReference type="RefSeq" id="YP_002411549.1">
    <property type="nucleotide sequence ID" value="NC_011751.1"/>
</dbReference>
<dbReference type="SMR" id="B7N9V2"/>
<dbReference type="STRING" id="585056.ECUMN_0791"/>
<dbReference type="KEGG" id="eum:ECUMN_0791"/>
<dbReference type="PATRIC" id="fig|585056.7.peg.995"/>
<dbReference type="HOGENOM" id="CLU_069535_0_0_6"/>
<dbReference type="Proteomes" id="UP000007097">
    <property type="component" value="Chromosome"/>
</dbReference>
<dbReference type="GO" id="GO:0017168">
    <property type="term" value="F:5-oxoprolinase (ATP-hydrolyzing) activity"/>
    <property type="evidence" value="ECO:0007669"/>
    <property type="project" value="UniProtKB-UniRule"/>
</dbReference>
<dbReference type="GO" id="GO:0005524">
    <property type="term" value="F:ATP binding"/>
    <property type="evidence" value="ECO:0007669"/>
    <property type="project" value="UniProtKB-UniRule"/>
</dbReference>
<dbReference type="GO" id="GO:0005975">
    <property type="term" value="P:carbohydrate metabolic process"/>
    <property type="evidence" value="ECO:0007669"/>
    <property type="project" value="InterPro"/>
</dbReference>
<dbReference type="CDD" id="cd10800">
    <property type="entry name" value="LamB_YcsF_YbgL_like"/>
    <property type="match status" value="1"/>
</dbReference>
<dbReference type="Gene3D" id="3.20.20.370">
    <property type="entry name" value="Glycoside hydrolase/deacetylase"/>
    <property type="match status" value="1"/>
</dbReference>
<dbReference type="HAMAP" id="MF_00691">
    <property type="entry name" value="PxpA"/>
    <property type="match status" value="1"/>
</dbReference>
<dbReference type="InterPro" id="IPR011330">
    <property type="entry name" value="Glyco_hydro/deAcase_b/a-brl"/>
</dbReference>
<dbReference type="InterPro" id="IPR005501">
    <property type="entry name" value="LamB/YcsF/PxpA-like"/>
</dbReference>
<dbReference type="NCBIfam" id="NF003812">
    <property type="entry name" value="PRK05406.1-1"/>
    <property type="match status" value="1"/>
</dbReference>
<dbReference type="NCBIfam" id="NF003814">
    <property type="entry name" value="PRK05406.1-3"/>
    <property type="match status" value="1"/>
</dbReference>
<dbReference type="NCBIfam" id="NF003815">
    <property type="entry name" value="PRK05406.1-4"/>
    <property type="match status" value="1"/>
</dbReference>
<dbReference type="NCBIfam" id="NF003816">
    <property type="entry name" value="PRK05406.1-5"/>
    <property type="match status" value="1"/>
</dbReference>
<dbReference type="PANTHER" id="PTHR30292:SF0">
    <property type="entry name" value="5-OXOPROLINASE SUBUNIT A"/>
    <property type="match status" value="1"/>
</dbReference>
<dbReference type="PANTHER" id="PTHR30292">
    <property type="entry name" value="UNCHARACTERIZED PROTEIN YBGL-RELATED"/>
    <property type="match status" value="1"/>
</dbReference>
<dbReference type="Pfam" id="PF03746">
    <property type="entry name" value="LamB_YcsF"/>
    <property type="match status" value="1"/>
</dbReference>
<dbReference type="SUPFAM" id="SSF88713">
    <property type="entry name" value="Glycoside hydrolase/deacetylase"/>
    <property type="match status" value="1"/>
</dbReference>
<gene>
    <name evidence="1" type="primary">pxpA</name>
    <name type="ordered locus">ECUMN_0791</name>
</gene>
<keyword id="KW-0067">ATP-binding</keyword>
<keyword id="KW-0378">Hydrolase</keyword>
<keyword id="KW-0547">Nucleotide-binding</keyword>